<protein>
    <recommendedName>
        <fullName evidence="1">Small ribosomal subunit protein uS9</fullName>
    </recommendedName>
    <alternativeName>
        <fullName evidence="3">30S ribosomal protein S9</fullName>
    </alternativeName>
</protein>
<proteinExistence type="evidence at protein level"/>
<dbReference type="EMBL" id="AL591983">
    <property type="protein sequence ID" value="CAD00674.1"/>
    <property type="molecule type" value="Genomic_DNA"/>
</dbReference>
<dbReference type="PIR" id="AD1399">
    <property type="entry name" value="AD1399"/>
</dbReference>
<dbReference type="RefSeq" id="NP_466119.1">
    <property type="nucleotide sequence ID" value="NC_003210.1"/>
</dbReference>
<dbReference type="RefSeq" id="WP_003723652.1">
    <property type="nucleotide sequence ID" value="NZ_CP149495.1"/>
</dbReference>
<dbReference type="PDB" id="7NHN">
    <property type="method" value="EM"/>
    <property type="resolution" value="2.90 A"/>
    <property type="chains" value="j=1-130"/>
</dbReference>
<dbReference type="PDBsum" id="7NHN"/>
<dbReference type="EMDB" id="EMD-12334"/>
<dbReference type="SMR" id="Q8Y459"/>
<dbReference type="STRING" id="169963.gene:17595314"/>
<dbReference type="PaxDb" id="169963-lmo2596"/>
<dbReference type="EnsemblBacteria" id="CAD00674">
    <property type="protein sequence ID" value="CAD00674"/>
    <property type="gene ID" value="CAD00674"/>
</dbReference>
<dbReference type="GeneID" id="93240477"/>
<dbReference type="GeneID" id="987216"/>
<dbReference type="KEGG" id="lmo:lmo2596"/>
<dbReference type="PATRIC" id="fig|169963.11.peg.2660"/>
<dbReference type="eggNOG" id="COG0103">
    <property type="taxonomic scope" value="Bacteria"/>
</dbReference>
<dbReference type="HOGENOM" id="CLU_046483_2_1_9"/>
<dbReference type="OrthoDB" id="9803965at2"/>
<dbReference type="PhylomeDB" id="Q8Y459"/>
<dbReference type="BioCyc" id="LMON169963:LMO2596-MONOMER"/>
<dbReference type="Proteomes" id="UP000000817">
    <property type="component" value="Chromosome"/>
</dbReference>
<dbReference type="GO" id="GO:0022627">
    <property type="term" value="C:cytosolic small ribosomal subunit"/>
    <property type="evidence" value="ECO:0000318"/>
    <property type="project" value="GO_Central"/>
</dbReference>
<dbReference type="GO" id="GO:0003723">
    <property type="term" value="F:RNA binding"/>
    <property type="evidence" value="ECO:0000318"/>
    <property type="project" value="GO_Central"/>
</dbReference>
<dbReference type="GO" id="GO:0003735">
    <property type="term" value="F:structural constituent of ribosome"/>
    <property type="evidence" value="ECO:0000318"/>
    <property type="project" value="GO_Central"/>
</dbReference>
<dbReference type="GO" id="GO:0006412">
    <property type="term" value="P:translation"/>
    <property type="evidence" value="ECO:0007669"/>
    <property type="project" value="UniProtKB-UniRule"/>
</dbReference>
<dbReference type="FunFam" id="3.30.230.10:FF:000001">
    <property type="entry name" value="30S ribosomal protein S9"/>
    <property type="match status" value="1"/>
</dbReference>
<dbReference type="Gene3D" id="3.30.230.10">
    <property type="match status" value="1"/>
</dbReference>
<dbReference type="HAMAP" id="MF_00532_B">
    <property type="entry name" value="Ribosomal_uS9_B"/>
    <property type="match status" value="1"/>
</dbReference>
<dbReference type="InterPro" id="IPR020568">
    <property type="entry name" value="Ribosomal_Su5_D2-typ_SF"/>
</dbReference>
<dbReference type="InterPro" id="IPR000754">
    <property type="entry name" value="Ribosomal_uS9"/>
</dbReference>
<dbReference type="InterPro" id="IPR023035">
    <property type="entry name" value="Ribosomal_uS9_bac/plastid"/>
</dbReference>
<dbReference type="InterPro" id="IPR020574">
    <property type="entry name" value="Ribosomal_uS9_CS"/>
</dbReference>
<dbReference type="InterPro" id="IPR014721">
    <property type="entry name" value="Ribsml_uS5_D2-typ_fold_subgr"/>
</dbReference>
<dbReference type="NCBIfam" id="NF001099">
    <property type="entry name" value="PRK00132.1"/>
    <property type="match status" value="1"/>
</dbReference>
<dbReference type="PANTHER" id="PTHR21569">
    <property type="entry name" value="RIBOSOMAL PROTEIN S9"/>
    <property type="match status" value="1"/>
</dbReference>
<dbReference type="PANTHER" id="PTHR21569:SF1">
    <property type="entry name" value="SMALL RIBOSOMAL SUBUNIT PROTEIN US9M"/>
    <property type="match status" value="1"/>
</dbReference>
<dbReference type="Pfam" id="PF00380">
    <property type="entry name" value="Ribosomal_S9"/>
    <property type="match status" value="1"/>
</dbReference>
<dbReference type="SUPFAM" id="SSF54211">
    <property type="entry name" value="Ribosomal protein S5 domain 2-like"/>
    <property type="match status" value="1"/>
</dbReference>
<dbReference type="PROSITE" id="PS00360">
    <property type="entry name" value="RIBOSOMAL_S9"/>
    <property type="match status" value="1"/>
</dbReference>
<reference key="1">
    <citation type="journal article" date="2001" name="Science">
        <title>Comparative genomics of Listeria species.</title>
        <authorList>
            <person name="Glaser P."/>
            <person name="Frangeul L."/>
            <person name="Buchrieser C."/>
            <person name="Rusniok C."/>
            <person name="Amend A."/>
            <person name="Baquero F."/>
            <person name="Berche P."/>
            <person name="Bloecker H."/>
            <person name="Brandt P."/>
            <person name="Chakraborty T."/>
            <person name="Charbit A."/>
            <person name="Chetouani F."/>
            <person name="Couve E."/>
            <person name="de Daruvar A."/>
            <person name="Dehoux P."/>
            <person name="Domann E."/>
            <person name="Dominguez-Bernal G."/>
            <person name="Duchaud E."/>
            <person name="Durant L."/>
            <person name="Dussurget O."/>
            <person name="Entian K.-D."/>
            <person name="Fsihi H."/>
            <person name="Garcia-del Portillo F."/>
            <person name="Garrido P."/>
            <person name="Gautier L."/>
            <person name="Goebel W."/>
            <person name="Gomez-Lopez N."/>
            <person name="Hain T."/>
            <person name="Hauf J."/>
            <person name="Jackson D."/>
            <person name="Jones L.-M."/>
            <person name="Kaerst U."/>
            <person name="Kreft J."/>
            <person name="Kuhn M."/>
            <person name="Kunst F."/>
            <person name="Kurapkat G."/>
            <person name="Madueno E."/>
            <person name="Maitournam A."/>
            <person name="Mata Vicente J."/>
            <person name="Ng E."/>
            <person name="Nedjari H."/>
            <person name="Nordsiek G."/>
            <person name="Novella S."/>
            <person name="de Pablos B."/>
            <person name="Perez-Diaz J.-C."/>
            <person name="Purcell R."/>
            <person name="Remmel B."/>
            <person name="Rose M."/>
            <person name="Schlueter T."/>
            <person name="Simoes N."/>
            <person name="Tierrez A."/>
            <person name="Vazquez-Boland J.-A."/>
            <person name="Voss H."/>
            <person name="Wehland J."/>
            <person name="Cossart P."/>
        </authorList>
    </citation>
    <scope>NUCLEOTIDE SEQUENCE [LARGE SCALE GENOMIC DNA]</scope>
    <source>
        <strain>ATCC BAA-679 / EGD-e</strain>
    </source>
</reference>
<feature type="chain" id="PRO_0000111372" description="Small ribosomal subunit protein uS9">
    <location>
        <begin position="1"/>
        <end position="130"/>
    </location>
</feature>
<feature type="region of interest" description="Disordered" evidence="2">
    <location>
        <begin position="102"/>
        <end position="130"/>
    </location>
</feature>
<feature type="compositionally biased region" description="Basic residues" evidence="2">
    <location>
        <begin position="111"/>
        <end position="130"/>
    </location>
</feature>
<sequence>MAQVQYYGTGRRKSSVARVRLVPGDGKIVINNRDWEDYIPFAALREVIKQPLVATETLGNYDVLVNVHGGGYTGQAGAIRHGVARALLQVAPEYRPALKSAGLLTRDSRMKERKKPGLKGARRAPQFSKR</sequence>
<accession>Q8Y459</accession>
<name>RS9_LISMO</name>
<organism>
    <name type="scientific">Listeria monocytogenes serovar 1/2a (strain ATCC BAA-679 / EGD-e)</name>
    <dbReference type="NCBI Taxonomy" id="169963"/>
    <lineage>
        <taxon>Bacteria</taxon>
        <taxon>Bacillati</taxon>
        <taxon>Bacillota</taxon>
        <taxon>Bacilli</taxon>
        <taxon>Bacillales</taxon>
        <taxon>Listeriaceae</taxon>
        <taxon>Listeria</taxon>
    </lineage>
</organism>
<evidence type="ECO:0000255" key="1">
    <source>
        <dbReference type="HAMAP-Rule" id="MF_00532"/>
    </source>
</evidence>
<evidence type="ECO:0000256" key="2">
    <source>
        <dbReference type="SAM" id="MobiDB-lite"/>
    </source>
</evidence>
<evidence type="ECO:0000305" key="3"/>
<gene>
    <name evidence="1" type="primary">rpsI</name>
    <name type="ordered locus">lmo2596</name>
</gene>
<comment type="similarity">
    <text evidence="1">Belongs to the universal ribosomal protein uS9 family.</text>
</comment>
<keyword id="KW-0002">3D-structure</keyword>
<keyword id="KW-1185">Reference proteome</keyword>
<keyword id="KW-0687">Ribonucleoprotein</keyword>
<keyword id="KW-0689">Ribosomal protein</keyword>